<name>SYFB_BURMA</name>
<sequence length="810" mass="88620">MQFPESWLRTFVDPQLTTDELSHALTMAGLEVESLRPAAPPTEKIVVGRVLEVVKHPDADKLNVCQVDAGTGATLQIVCGAPNVAPGIKVPVALVGAKLPPAEEGGAPFAIKLSKLRGVESQGMLCSARELKLSEDHSGLMILPEGTPVGQDIREALNLDDTVFEIKLTPNKADCLSVFGIARETAAITGAPLAAPDIRPVLAELTETLPVKISAPDLCGRFSGRVIRGVNARAKTPHWMVERLERAGQRSVSALVDISNYVMFELGRPSHVFDLDKIHGGIDVRWGKRGESLKLLNGNTIELDETVGVISDGAQVESLAGIMGGDSTAVTLDTTNIYLEAAFWWPDSIRGRARKYNFSTDAAHRFERGVDYSTTVEHVERITQLILDICGGQAGPVDDQIVSLPQRAPVSMRASRANRIIGVEIGEDEIAQIFTRLGLAFERDGDVFRVTPPPHRFDIEIEEDLIEEVARIYGFEKIPARPPVAKSEMRATDETRRSVHAIRHALAARDYAETVNFSFVDAEWERDFAGNDNPVRLLNPIASQLSVMRTTLFGSLVGVLRHNLNRRAERVRVFEAGRVFVADPSVKAGELAVEGYAQPKRIGALAYGPVVEEQWGTATRQVDYFDVKGDLEALLAPVPARFVKAEHPALHPGRSARIEVDGHAVGWIGELHPRLMQKYELPHAPVMFEIDTDALVARALPAPSEVSKFPPVRRDIAVVVDQKVEVQALFDEMKKALADDACKFVQRVALFDEFRAKSNTSGGLSAHEKSLAFRVTLQDAAGTLQDETVDQAIQTLVDRMARVYGARLRG</sequence>
<proteinExistence type="inferred from homology"/>
<comment type="catalytic activity">
    <reaction evidence="1">
        <text>tRNA(Phe) + L-phenylalanine + ATP = L-phenylalanyl-tRNA(Phe) + AMP + diphosphate + H(+)</text>
        <dbReference type="Rhea" id="RHEA:19413"/>
        <dbReference type="Rhea" id="RHEA-COMP:9668"/>
        <dbReference type="Rhea" id="RHEA-COMP:9699"/>
        <dbReference type="ChEBI" id="CHEBI:15378"/>
        <dbReference type="ChEBI" id="CHEBI:30616"/>
        <dbReference type="ChEBI" id="CHEBI:33019"/>
        <dbReference type="ChEBI" id="CHEBI:58095"/>
        <dbReference type="ChEBI" id="CHEBI:78442"/>
        <dbReference type="ChEBI" id="CHEBI:78531"/>
        <dbReference type="ChEBI" id="CHEBI:456215"/>
        <dbReference type="EC" id="6.1.1.20"/>
    </reaction>
</comment>
<comment type="cofactor">
    <cofactor evidence="1">
        <name>Mg(2+)</name>
        <dbReference type="ChEBI" id="CHEBI:18420"/>
    </cofactor>
    <text evidence="1">Binds 2 magnesium ions per tetramer.</text>
</comment>
<comment type="subunit">
    <text evidence="1">Tetramer of two alpha and two beta subunits.</text>
</comment>
<comment type="subcellular location">
    <subcellularLocation>
        <location evidence="1">Cytoplasm</location>
    </subcellularLocation>
</comment>
<comment type="similarity">
    <text evidence="1">Belongs to the phenylalanyl-tRNA synthetase beta subunit family. Type 1 subfamily.</text>
</comment>
<feature type="chain" id="PRO_0000126859" description="Phenylalanine--tRNA ligase beta subunit">
    <location>
        <begin position="1"/>
        <end position="810"/>
    </location>
</feature>
<feature type="domain" description="tRNA-binding" evidence="1">
    <location>
        <begin position="39"/>
        <end position="154"/>
    </location>
</feature>
<feature type="domain" description="B5" evidence="1">
    <location>
        <begin position="405"/>
        <end position="480"/>
    </location>
</feature>
<feature type="domain" description="FDX-ACB" evidence="1">
    <location>
        <begin position="707"/>
        <end position="809"/>
    </location>
</feature>
<feature type="binding site" evidence="1">
    <location>
        <position position="458"/>
    </location>
    <ligand>
        <name>Mg(2+)</name>
        <dbReference type="ChEBI" id="CHEBI:18420"/>
        <note>shared with alpha subunit</note>
    </ligand>
</feature>
<feature type="binding site" evidence="1">
    <location>
        <position position="464"/>
    </location>
    <ligand>
        <name>Mg(2+)</name>
        <dbReference type="ChEBI" id="CHEBI:18420"/>
        <note>shared with alpha subunit</note>
    </ligand>
</feature>
<feature type="binding site" evidence="1">
    <location>
        <position position="467"/>
    </location>
    <ligand>
        <name>Mg(2+)</name>
        <dbReference type="ChEBI" id="CHEBI:18420"/>
        <note>shared with alpha subunit</note>
    </ligand>
</feature>
<feature type="binding site" evidence="1">
    <location>
        <position position="468"/>
    </location>
    <ligand>
        <name>Mg(2+)</name>
        <dbReference type="ChEBI" id="CHEBI:18420"/>
        <note>shared with alpha subunit</note>
    </ligand>
</feature>
<reference key="1">
    <citation type="journal article" date="2004" name="Proc. Natl. Acad. Sci. U.S.A.">
        <title>Structural flexibility in the Burkholderia mallei genome.</title>
        <authorList>
            <person name="Nierman W.C."/>
            <person name="DeShazer D."/>
            <person name="Kim H.S."/>
            <person name="Tettelin H."/>
            <person name="Nelson K.E."/>
            <person name="Feldblyum T.V."/>
            <person name="Ulrich R.L."/>
            <person name="Ronning C.M."/>
            <person name="Brinkac L.M."/>
            <person name="Daugherty S.C."/>
            <person name="Davidsen T.D."/>
            <person name="DeBoy R.T."/>
            <person name="Dimitrov G."/>
            <person name="Dodson R.J."/>
            <person name="Durkin A.S."/>
            <person name="Gwinn M.L."/>
            <person name="Haft D.H."/>
            <person name="Khouri H.M."/>
            <person name="Kolonay J.F."/>
            <person name="Madupu R."/>
            <person name="Mohammoud Y."/>
            <person name="Nelson W.C."/>
            <person name="Radune D."/>
            <person name="Romero C.M."/>
            <person name="Sarria S."/>
            <person name="Selengut J."/>
            <person name="Shamblin C."/>
            <person name="Sullivan S.A."/>
            <person name="White O."/>
            <person name="Yu Y."/>
            <person name="Zafar N."/>
            <person name="Zhou L."/>
            <person name="Fraser C.M."/>
        </authorList>
    </citation>
    <scope>NUCLEOTIDE SEQUENCE [LARGE SCALE GENOMIC DNA]</scope>
    <source>
        <strain>ATCC 23344</strain>
    </source>
</reference>
<gene>
    <name evidence="1" type="primary">pheT</name>
    <name type="ordered locus">BMA1091</name>
</gene>
<organism>
    <name type="scientific">Burkholderia mallei (strain ATCC 23344)</name>
    <dbReference type="NCBI Taxonomy" id="243160"/>
    <lineage>
        <taxon>Bacteria</taxon>
        <taxon>Pseudomonadati</taxon>
        <taxon>Pseudomonadota</taxon>
        <taxon>Betaproteobacteria</taxon>
        <taxon>Burkholderiales</taxon>
        <taxon>Burkholderiaceae</taxon>
        <taxon>Burkholderia</taxon>
        <taxon>pseudomallei group</taxon>
    </lineage>
</organism>
<keyword id="KW-0030">Aminoacyl-tRNA synthetase</keyword>
<keyword id="KW-0067">ATP-binding</keyword>
<keyword id="KW-0963">Cytoplasm</keyword>
<keyword id="KW-0436">Ligase</keyword>
<keyword id="KW-0460">Magnesium</keyword>
<keyword id="KW-0479">Metal-binding</keyword>
<keyword id="KW-0547">Nucleotide-binding</keyword>
<keyword id="KW-0648">Protein biosynthesis</keyword>
<keyword id="KW-1185">Reference proteome</keyword>
<keyword id="KW-0694">RNA-binding</keyword>
<keyword id="KW-0820">tRNA-binding</keyword>
<protein>
    <recommendedName>
        <fullName evidence="1">Phenylalanine--tRNA ligase beta subunit</fullName>
        <ecNumber evidence="1">6.1.1.20</ecNumber>
    </recommendedName>
    <alternativeName>
        <fullName evidence="1">Phenylalanyl-tRNA synthetase beta subunit</fullName>
        <shortName evidence="1">PheRS</shortName>
    </alternativeName>
</protein>
<evidence type="ECO:0000255" key="1">
    <source>
        <dbReference type="HAMAP-Rule" id="MF_00283"/>
    </source>
</evidence>
<accession>Q62KI7</accession>
<dbReference type="EC" id="6.1.1.20" evidence="1"/>
<dbReference type="EMBL" id="CP000010">
    <property type="protein sequence ID" value="AAU49317.1"/>
    <property type="molecule type" value="Genomic_DNA"/>
</dbReference>
<dbReference type="RefSeq" id="WP_004193113.1">
    <property type="nucleotide sequence ID" value="NC_006348.1"/>
</dbReference>
<dbReference type="RefSeq" id="YP_102782.1">
    <property type="nucleotide sequence ID" value="NC_006348.1"/>
</dbReference>
<dbReference type="SMR" id="Q62KI7"/>
<dbReference type="GeneID" id="92978834"/>
<dbReference type="KEGG" id="bma:BMA1091"/>
<dbReference type="PATRIC" id="fig|243160.12.peg.1124"/>
<dbReference type="eggNOG" id="COG0072">
    <property type="taxonomic scope" value="Bacteria"/>
</dbReference>
<dbReference type="eggNOG" id="COG0073">
    <property type="taxonomic scope" value="Bacteria"/>
</dbReference>
<dbReference type="HOGENOM" id="CLU_016891_0_0_4"/>
<dbReference type="Proteomes" id="UP000006693">
    <property type="component" value="Chromosome 1"/>
</dbReference>
<dbReference type="GO" id="GO:0009328">
    <property type="term" value="C:phenylalanine-tRNA ligase complex"/>
    <property type="evidence" value="ECO:0007669"/>
    <property type="project" value="TreeGrafter"/>
</dbReference>
<dbReference type="GO" id="GO:0005524">
    <property type="term" value="F:ATP binding"/>
    <property type="evidence" value="ECO:0007669"/>
    <property type="project" value="UniProtKB-UniRule"/>
</dbReference>
<dbReference type="GO" id="GO:0000287">
    <property type="term" value="F:magnesium ion binding"/>
    <property type="evidence" value="ECO:0007669"/>
    <property type="project" value="UniProtKB-UniRule"/>
</dbReference>
<dbReference type="GO" id="GO:0004826">
    <property type="term" value="F:phenylalanine-tRNA ligase activity"/>
    <property type="evidence" value="ECO:0007669"/>
    <property type="project" value="UniProtKB-UniRule"/>
</dbReference>
<dbReference type="GO" id="GO:0000049">
    <property type="term" value="F:tRNA binding"/>
    <property type="evidence" value="ECO:0007669"/>
    <property type="project" value="UniProtKB-KW"/>
</dbReference>
<dbReference type="GO" id="GO:0006432">
    <property type="term" value="P:phenylalanyl-tRNA aminoacylation"/>
    <property type="evidence" value="ECO:0007669"/>
    <property type="project" value="UniProtKB-UniRule"/>
</dbReference>
<dbReference type="CDD" id="cd00769">
    <property type="entry name" value="PheRS_beta_core"/>
    <property type="match status" value="1"/>
</dbReference>
<dbReference type="CDD" id="cd02796">
    <property type="entry name" value="tRNA_bind_bactPheRS"/>
    <property type="match status" value="1"/>
</dbReference>
<dbReference type="FunFam" id="2.40.50.140:FF:000045">
    <property type="entry name" value="Phenylalanine--tRNA ligase beta subunit"/>
    <property type="match status" value="1"/>
</dbReference>
<dbReference type="FunFam" id="3.30.56.10:FF:000002">
    <property type="entry name" value="Phenylalanine--tRNA ligase beta subunit"/>
    <property type="match status" value="1"/>
</dbReference>
<dbReference type="FunFam" id="3.30.930.10:FF:000022">
    <property type="entry name" value="Phenylalanine--tRNA ligase beta subunit"/>
    <property type="match status" value="1"/>
</dbReference>
<dbReference type="Gene3D" id="3.30.56.10">
    <property type="match status" value="2"/>
</dbReference>
<dbReference type="Gene3D" id="3.30.930.10">
    <property type="entry name" value="Bira Bifunctional Protein, Domain 2"/>
    <property type="match status" value="1"/>
</dbReference>
<dbReference type="Gene3D" id="3.30.70.380">
    <property type="entry name" value="Ferrodoxin-fold anticodon-binding domain"/>
    <property type="match status" value="1"/>
</dbReference>
<dbReference type="Gene3D" id="2.40.50.140">
    <property type="entry name" value="Nucleic acid-binding proteins"/>
    <property type="match status" value="1"/>
</dbReference>
<dbReference type="Gene3D" id="3.50.40.10">
    <property type="entry name" value="Phenylalanyl-trna Synthetase, Chain B, domain 3"/>
    <property type="match status" value="1"/>
</dbReference>
<dbReference type="HAMAP" id="MF_00283">
    <property type="entry name" value="Phe_tRNA_synth_beta1"/>
    <property type="match status" value="1"/>
</dbReference>
<dbReference type="InterPro" id="IPR045864">
    <property type="entry name" value="aa-tRNA-synth_II/BPL/LPL"/>
</dbReference>
<dbReference type="InterPro" id="IPR005146">
    <property type="entry name" value="B3/B4_tRNA-bd"/>
</dbReference>
<dbReference type="InterPro" id="IPR009061">
    <property type="entry name" value="DNA-bd_dom_put_sf"/>
</dbReference>
<dbReference type="InterPro" id="IPR005121">
    <property type="entry name" value="Fdx_antiC-bd"/>
</dbReference>
<dbReference type="InterPro" id="IPR036690">
    <property type="entry name" value="Fdx_antiC-bd_sf"/>
</dbReference>
<dbReference type="InterPro" id="IPR012340">
    <property type="entry name" value="NA-bd_OB-fold"/>
</dbReference>
<dbReference type="InterPro" id="IPR045060">
    <property type="entry name" value="Phe-tRNA-ligase_IIc_bsu"/>
</dbReference>
<dbReference type="InterPro" id="IPR004532">
    <property type="entry name" value="Phe-tRNA-ligase_IIc_bsu_bact"/>
</dbReference>
<dbReference type="InterPro" id="IPR020825">
    <property type="entry name" value="Phe-tRNA_synthase-like_B3/B4"/>
</dbReference>
<dbReference type="InterPro" id="IPR041616">
    <property type="entry name" value="PheRS_beta_core"/>
</dbReference>
<dbReference type="InterPro" id="IPR002547">
    <property type="entry name" value="tRNA-bd_dom"/>
</dbReference>
<dbReference type="InterPro" id="IPR033714">
    <property type="entry name" value="tRNA_bind_bactPheRS"/>
</dbReference>
<dbReference type="InterPro" id="IPR005147">
    <property type="entry name" value="tRNA_synthase_B5-dom"/>
</dbReference>
<dbReference type="NCBIfam" id="TIGR00472">
    <property type="entry name" value="pheT_bact"/>
    <property type="match status" value="1"/>
</dbReference>
<dbReference type="NCBIfam" id="NF045760">
    <property type="entry name" value="YtpR"/>
    <property type="match status" value="1"/>
</dbReference>
<dbReference type="PANTHER" id="PTHR10947:SF0">
    <property type="entry name" value="PHENYLALANINE--TRNA LIGASE BETA SUBUNIT"/>
    <property type="match status" value="1"/>
</dbReference>
<dbReference type="PANTHER" id="PTHR10947">
    <property type="entry name" value="PHENYLALANYL-TRNA SYNTHETASE BETA CHAIN AND LEUCINE-RICH REPEAT-CONTAINING PROTEIN 47"/>
    <property type="match status" value="1"/>
</dbReference>
<dbReference type="Pfam" id="PF03483">
    <property type="entry name" value="B3_4"/>
    <property type="match status" value="1"/>
</dbReference>
<dbReference type="Pfam" id="PF03484">
    <property type="entry name" value="B5"/>
    <property type="match status" value="1"/>
</dbReference>
<dbReference type="Pfam" id="PF03147">
    <property type="entry name" value="FDX-ACB"/>
    <property type="match status" value="1"/>
</dbReference>
<dbReference type="Pfam" id="PF01588">
    <property type="entry name" value="tRNA_bind"/>
    <property type="match status" value="1"/>
</dbReference>
<dbReference type="Pfam" id="PF17759">
    <property type="entry name" value="tRNA_synthFbeta"/>
    <property type="match status" value="1"/>
</dbReference>
<dbReference type="SMART" id="SM00873">
    <property type="entry name" value="B3_4"/>
    <property type="match status" value="1"/>
</dbReference>
<dbReference type="SMART" id="SM00874">
    <property type="entry name" value="B5"/>
    <property type="match status" value="1"/>
</dbReference>
<dbReference type="SMART" id="SM00896">
    <property type="entry name" value="FDX-ACB"/>
    <property type="match status" value="1"/>
</dbReference>
<dbReference type="SUPFAM" id="SSF54991">
    <property type="entry name" value="Anticodon-binding domain of PheRS"/>
    <property type="match status" value="1"/>
</dbReference>
<dbReference type="SUPFAM" id="SSF55681">
    <property type="entry name" value="Class II aaRS and biotin synthetases"/>
    <property type="match status" value="1"/>
</dbReference>
<dbReference type="SUPFAM" id="SSF50249">
    <property type="entry name" value="Nucleic acid-binding proteins"/>
    <property type="match status" value="1"/>
</dbReference>
<dbReference type="SUPFAM" id="SSF56037">
    <property type="entry name" value="PheT/TilS domain"/>
    <property type="match status" value="1"/>
</dbReference>
<dbReference type="SUPFAM" id="SSF46955">
    <property type="entry name" value="Putative DNA-binding domain"/>
    <property type="match status" value="1"/>
</dbReference>
<dbReference type="PROSITE" id="PS51483">
    <property type="entry name" value="B5"/>
    <property type="match status" value="1"/>
</dbReference>
<dbReference type="PROSITE" id="PS51447">
    <property type="entry name" value="FDX_ACB"/>
    <property type="match status" value="1"/>
</dbReference>
<dbReference type="PROSITE" id="PS50886">
    <property type="entry name" value="TRBD"/>
    <property type="match status" value="1"/>
</dbReference>